<geneLocation type="chloroplast"/>
<sequence length="515" mass="61046">MDEFHRNGKEDSSWQQCFLYPLFFQEDLYAIYHDHYLDGSSSSEPMEHVSSNDQFSFLTVKRLIGQIRQQNHSIFLFVNRDPNPLVDRNKSSYSESVLEGLTLVLEVPFSIRSKNSVEGINEWKSFRSIHSIFPFLEDKFPHSNYISDTRIPYSIHPEILVRTFRRWIRDAPSLHLLRSVLYEYRNSSENLQRSLIVAPRVNTRFFLFLWNHYVYECESILVPLLKRSSHSRSLSHGSFPERTHFNRKIKHILIFSRRNSLKRIWSLKDPNIHYVRYGERSIIAIKGTHLLVKKCRYHLLIFRQCYFHLWFEPYRVCSHQLSKNCSSSLGYFLRIRMKPLLVRTKMLDELFIADLITGEFDPIVPIIPIIGLLAREKFCDISGRPISKLSWTSLTDDDILDRFDRIWRNIFHYYSGSFGRDGLYRIKYILSLSCAKTLACKHKSTIRVVRKELGPELFKKSFSKEREFDSPPFSSKSGARSQRERIWHSDIPQINPLANSWQKIQDLKVENLFDQ</sequence>
<protein>
    <recommendedName>
        <fullName evidence="1">Maturase K</fullName>
    </recommendedName>
    <alternativeName>
        <fullName evidence="1">Intron maturase</fullName>
    </alternativeName>
</protein>
<feature type="chain" id="PRO_0000143656" description="Maturase K">
    <location>
        <begin position="1"/>
        <end position="515"/>
    </location>
</feature>
<gene>
    <name evidence="1" type="primary">matK</name>
</gene>
<comment type="function">
    <text evidence="1">Usually encoded in the trnK tRNA gene intron. Probably assists in splicing its own and other chloroplast group II introns.</text>
</comment>
<comment type="subcellular location">
    <subcellularLocation>
        <location>Plastid</location>
        <location>Chloroplast</location>
    </subcellularLocation>
</comment>
<comment type="similarity">
    <text evidence="1">Belongs to the intron maturase 2 family. MatK subfamily.</text>
</comment>
<reference key="1">
    <citation type="journal article" date="2000" name="Mol. Biol. Evol.">
        <title>Phylogeny and divergence times in Pinaceae: evidence from three genomes.</title>
        <authorList>
            <person name="Wang X.Q."/>
            <person name="Tank D.C."/>
            <person name="Sang T."/>
        </authorList>
    </citation>
    <scope>NUCLEOTIDE SEQUENCE [GENOMIC DNA]</scope>
</reference>
<organism>
    <name type="scientific">Pseudotsuga menziesii</name>
    <name type="common">Douglas-fir</name>
    <name type="synonym">Abies menziesii</name>
    <dbReference type="NCBI Taxonomy" id="3357"/>
    <lineage>
        <taxon>Eukaryota</taxon>
        <taxon>Viridiplantae</taxon>
        <taxon>Streptophyta</taxon>
        <taxon>Embryophyta</taxon>
        <taxon>Tracheophyta</taxon>
        <taxon>Spermatophyta</taxon>
        <taxon>Pinopsida</taxon>
        <taxon>Pinidae</taxon>
        <taxon>Conifers I</taxon>
        <taxon>Pinales</taxon>
        <taxon>Pinaceae</taxon>
        <taxon>Pseudotsuga</taxon>
    </lineage>
</organism>
<proteinExistence type="inferred from homology"/>
<name>MATK_PSEMZ</name>
<accession>Q9MV48</accession>
<evidence type="ECO:0000255" key="1">
    <source>
        <dbReference type="HAMAP-Rule" id="MF_01390"/>
    </source>
</evidence>
<dbReference type="EMBL" id="AF143439">
    <property type="protein sequence ID" value="AAF69194.1"/>
    <property type="molecule type" value="Genomic_DNA"/>
</dbReference>
<dbReference type="GO" id="GO:0009507">
    <property type="term" value="C:chloroplast"/>
    <property type="evidence" value="ECO:0007669"/>
    <property type="project" value="UniProtKB-SubCell"/>
</dbReference>
<dbReference type="GO" id="GO:0003723">
    <property type="term" value="F:RNA binding"/>
    <property type="evidence" value="ECO:0007669"/>
    <property type="project" value="UniProtKB-KW"/>
</dbReference>
<dbReference type="GO" id="GO:0006397">
    <property type="term" value="P:mRNA processing"/>
    <property type="evidence" value="ECO:0007669"/>
    <property type="project" value="UniProtKB-KW"/>
</dbReference>
<dbReference type="GO" id="GO:0008380">
    <property type="term" value="P:RNA splicing"/>
    <property type="evidence" value="ECO:0007669"/>
    <property type="project" value="UniProtKB-UniRule"/>
</dbReference>
<dbReference type="GO" id="GO:0008033">
    <property type="term" value="P:tRNA processing"/>
    <property type="evidence" value="ECO:0007669"/>
    <property type="project" value="UniProtKB-KW"/>
</dbReference>
<dbReference type="HAMAP" id="MF_01390">
    <property type="entry name" value="MatK"/>
    <property type="match status" value="1"/>
</dbReference>
<dbReference type="InterPro" id="IPR024937">
    <property type="entry name" value="Domain_X"/>
</dbReference>
<dbReference type="InterPro" id="IPR002866">
    <property type="entry name" value="Maturase_MatK"/>
</dbReference>
<dbReference type="InterPro" id="IPR024942">
    <property type="entry name" value="Maturase_MatK_N"/>
</dbReference>
<dbReference type="PANTHER" id="PTHR34811">
    <property type="entry name" value="MATURASE K"/>
    <property type="match status" value="1"/>
</dbReference>
<dbReference type="PANTHER" id="PTHR34811:SF1">
    <property type="entry name" value="MATURASE K"/>
    <property type="match status" value="1"/>
</dbReference>
<dbReference type="Pfam" id="PF01348">
    <property type="entry name" value="Intron_maturas2"/>
    <property type="match status" value="1"/>
</dbReference>
<dbReference type="Pfam" id="PF01824">
    <property type="entry name" value="MatK_N"/>
    <property type="match status" value="1"/>
</dbReference>
<keyword id="KW-0150">Chloroplast</keyword>
<keyword id="KW-0507">mRNA processing</keyword>
<keyword id="KW-0934">Plastid</keyword>
<keyword id="KW-0694">RNA-binding</keyword>
<keyword id="KW-0819">tRNA processing</keyword>